<proteinExistence type="inferred from homology"/>
<feature type="chain" id="PRO_0000269530" description="Pyrimidine-nucleoside phosphorylase">
    <location>
        <begin position="1"/>
        <end position="433"/>
    </location>
</feature>
<feature type="binding site" evidence="1">
    <location>
        <begin position="81"/>
        <end position="83"/>
    </location>
    <ligand>
        <name>phosphate</name>
        <dbReference type="ChEBI" id="CHEBI:43474"/>
    </ligand>
</feature>
<feature type="binding site" evidence="1">
    <location>
        <position position="88"/>
    </location>
    <ligand>
        <name>K(+)</name>
        <dbReference type="ChEBI" id="CHEBI:29103"/>
    </ligand>
</feature>
<feature type="binding site" evidence="1">
    <location>
        <position position="90"/>
    </location>
    <ligand>
        <name>K(+)</name>
        <dbReference type="ChEBI" id="CHEBI:29103"/>
    </ligand>
</feature>
<feature type="binding site" evidence="1">
    <location>
        <position position="92"/>
    </location>
    <ligand>
        <name>phosphate</name>
        <dbReference type="ChEBI" id="CHEBI:43474"/>
    </ligand>
</feature>
<feature type="binding site" evidence="1">
    <location>
        <begin position="108"/>
        <end position="110"/>
    </location>
    <ligand>
        <name>phosphate</name>
        <dbReference type="ChEBI" id="CHEBI:43474"/>
    </ligand>
</feature>
<feature type="binding site" evidence="1">
    <location>
        <position position="120"/>
    </location>
    <ligand>
        <name>phosphate</name>
        <dbReference type="ChEBI" id="CHEBI:43474"/>
    </ligand>
</feature>
<feature type="binding site" evidence="1">
    <location>
        <position position="168"/>
    </location>
    <ligand>
        <name>substrate</name>
    </ligand>
</feature>
<feature type="binding site" evidence="1">
    <location>
        <position position="187"/>
    </location>
    <ligand>
        <name>substrate</name>
    </ligand>
</feature>
<feature type="binding site" evidence="1">
    <location>
        <position position="243"/>
    </location>
    <ligand>
        <name>K(+)</name>
        <dbReference type="ChEBI" id="CHEBI:29103"/>
    </ligand>
</feature>
<feature type="binding site" evidence="1">
    <location>
        <position position="246"/>
    </location>
    <ligand>
        <name>K(+)</name>
        <dbReference type="ChEBI" id="CHEBI:29103"/>
    </ligand>
</feature>
<feature type="binding site" evidence="1">
    <location>
        <position position="255"/>
    </location>
    <ligand>
        <name>K(+)</name>
        <dbReference type="ChEBI" id="CHEBI:29103"/>
    </ligand>
</feature>
<name>PDP_STAA3</name>
<organism>
    <name type="scientific">Staphylococcus aureus (strain USA300)</name>
    <dbReference type="NCBI Taxonomy" id="367830"/>
    <lineage>
        <taxon>Bacteria</taxon>
        <taxon>Bacillati</taxon>
        <taxon>Bacillota</taxon>
        <taxon>Bacilli</taxon>
        <taxon>Bacillales</taxon>
        <taxon>Staphylococcaceae</taxon>
        <taxon>Staphylococcus</taxon>
    </lineage>
</organism>
<reference key="1">
    <citation type="journal article" date="2006" name="Lancet">
        <title>Complete genome sequence of USA300, an epidemic clone of community-acquired meticillin-resistant Staphylococcus aureus.</title>
        <authorList>
            <person name="Diep B.A."/>
            <person name="Gill S.R."/>
            <person name="Chang R.F."/>
            <person name="Phan T.H."/>
            <person name="Chen J.H."/>
            <person name="Davidson M.G."/>
            <person name="Lin F."/>
            <person name="Lin J."/>
            <person name="Carleton H.A."/>
            <person name="Mongodin E.F."/>
            <person name="Sensabaugh G.F."/>
            <person name="Perdreau-Remington F."/>
        </authorList>
    </citation>
    <scope>NUCLEOTIDE SEQUENCE [LARGE SCALE GENOMIC DNA]</scope>
    <source>
        <strain>USA300</strain>
    </source>
</reference>
<sequence>MRMIDIIEKKRDGHTLTTEEINFFIGGYVKGDIPDYQASSLAMAIYFQDMNDDERAALTMAMVNSGDMIDLSDIKGVKVDKHSTGGVGDTTTLVLAPLVAAVDVPVAKMSGRGLGHTGGTIDKLEAIDGFHVEIDEATFVKLVNENKVAVVGQSGNLTPADKKLYALRDVTGTVNSIPLIASSIMSKKIAAGADAIVLDVKTGSGAFMKTLEDAEALAHAMVRIGNNVGRNTMAIISDMNQPLGRAIGNALELQEAIDTLKGQGPKDLTELVLTLGSQMVVLANKAETLEEARALLIEAINSGAALEKFKTFIKNQGGDETVIDHPERLPQAQYQIEYKAKKSGYVTELVSNDIGVASMMLGAGRLTKEDDIDLAVGIVLNKKIGDKVEEGESLLTIHSNRQDVDDVVKKLDSSITIADHVVSPTLIHKIITE</sequence>
<keyword id="KW-0328">Glycosyltransferase</keyword>
<keyword id="KW-0479">Metal-binding</keyword>
<keyword id="KW-0630">Potassium</keyword>
<keyword id="KW-0808">Transferase</keyword>
<dbReference type="EC" id="2.4.2.2"/>
<dbReference type="EMBL" id="CP000255">
    <property type="protein sequence ID" value="ABD21766.1"/>
    <property type="status" value="ALT_INIT"/>
    <property type="molecule type" value="Genomic_DNA"/>
</dbReference>
<dbReference type="RefSeq" id="WP_001242318.1">
    <property type="nucleotide sequence ID" value="NZ_CP027476.1"/>
</dbReference>
<dbReference type="SMR" id="Q2FEZ3"/>
<dbReference type="KEGG" id="saa:SAUSA300_2089"/>
<dbReference type="HOGENOM" id="CLU_025040_0_1_9"/>
<dbReference type="Proteomes" id="UP000001939">
    <property type="component" value="Chromosome"/>
</dbReference>
<dbReference type="GO" id="GO:0005829">
    <property type="term" value="C:cytosol"/>
    <property type="evidence" value="ECO:0007669"/>
    <property type="project" value="TreeGrafter"/>
</dbReference>
<dbReference type="GO" id="GO:0004645">
    <property type="term" value="F:1,4-alpha-oligoglucan phosphorylase activity"/>
    <property type="evidence" value="ECO:0007669"/>
    <property type="project" value="InterPro"/>
</dbReference>
<dbReference type="GO" id="GO:0047847">
    <property type="term" value="F:deoxyuridine phosphorylase activity"/>
    <property type="evidence" value="ECO:0007669"/>
    <property type="project" value="RHEA"/>
</dbReference>
<dbReference type="GO" id="GO:0046872">
    <property type="term" value="F:metal ion binding"/>
    <property type="evidence" value="ECO:0007669"/>
    <property type="project" value="UniProtKB-KW"/>
</dbReference>
<dbReference type="GO" id="GO:0009032">
    <property type="term" value="F:thymidine phosphorylase activity"/>
    <property type="evidence" value="ECO:0007669"/>
    <property type="project" value="TreeGrafter"/>
</dbReference>
<dbReference type="GO" id="GO:0004850">
    <property type="term" value="F:uridine phosphorylase activity"/>
    <property type="evidence" value="ECO:0007669"/>
    <property type="project" value="RHEA"/>
</dbReference>
<dbReference type="GO" id="GO:0006206">
    <property type="term" value="P:pyrimidine nucleobase metabolic process"/>
    <property type="evidence" value="ECO:0007669"/>
    <property type="project" value="InterPro"/>
</dbReference>
<dbReference type="GO" id="GO:0006213">
    <property type="term" value="P:pyrimidine nucleoside metabolic process"/>
    <property type="evidence" value="ECO:0007669"/>
    <property type="project" value="InterPro"/>
</dbReference>
<dbReference type="FunFam" id="1.20.970.10:FF:000002">
    <property type="entry name" value="Pyrimidine-nucleoside phosphorylase"/>
    <property type="match status" value="1"/>
</dbReference>
<dbReference type="FunFam" id="3.40.1030.10:FF:000003">
    <property type="entry name" value="Pyrimidine-nucleoside phosphorylase"/>
    <property type="match status" value="1"/>
</dbReference>
<dbReference type="Gene3D" id="3.40.1030.10">
    <property type="entry name" value="Nucleoside phosphorylase/phosphoribosyltransferase catalytic domain"/>
    <property type="match status" value="1"/>
</dbReference>
<dbReference type="Gene3D" id="3.90.1170.30">
    <property type="entry name" value="Pyrimidine nucleoside phosphorylase-like, C-terminal domain"/>
    <property type="match status" value="1"/>
</dbReference>
<dbReference type="Gene3D" id="1.20.970.10">
    <property type="entry name" value="Transferase, Pyrimidine Nucleoside Phosphorylase, Chain C"/>
    <property type="match status" value="1"/>
</dbReference>
<dbReference type="InterPro" id="IPR000312">
    <property type="entry name" value="Glycosyl_Trfase_fam3"/>
</dbReference>
<dbReference type="InterPro" id="IPR017459">
    <property type="entry name" value="Glycosyl_Trfase_fam3_N_dom"/>
</dbReference>
<dbReference type="InterPro" id="IPR036320">
    <property type="entry name" value="Glycosyl_Trfase_fam3_N_dom_sf"/>
</dbReference>
<dbReference type="InterPro" id="IPR035902">
    <property type="entry name" value="Nuc_phospho_transferase"/>
</dbReference>
<dbReference type="InterPro" id="IPR036566">
    <property type="entry name" value="PYNP-like_C_sf"/>
</dbReference>
<dbReference type="InterPro" id="IPR013102">
    <property type="entry name" value="PYNP_C"/>
</dbReference>
<dbReference type="InterPro" id="IPR018090">
    <property type="entry name" value="Pyrmidine_PPas_bac/euk"/>
</dbReference>
<dbReference type="InterPro" id="IPR017872">
    <property type="entry name" value="Pyrmidine_PPase_CS"/>
</dbReference>
<dbReference type="InterPro" id="IPR000053">
    <property type="entry name" value="Thymidine/pyrmidine_PPase"/>
</dbReference>
<dbReference type="NCBIfam" id="NF004490">
    <property type="entry name" value="PRK05820.1"/>
    <property type="match status" value="1"/>
</dbReference>
<dbReference type="NCBIfam" id="NF004747">
    <property type="entry name" value="PRK06078.1"/>
    <property type="match status" value="1"/>
</dbReference>
<dbReference type="NCBIfam" id="TIGR02644">
    <property type="entry name" value="Y_phosphoryl"/>
    <property type="match status" value="1"/>
</dbReference>
<dbReference type="PANTHER" id="PTHR10515">
    <property type="entry name" value="THYMIDINE PHOSPHORYLASE"/>
    <property type="match status" value="1"/>
</dbReference>
<dbReference type="PANTHER" id="PTHR10515:SF0">
    <property type="entry name" value="THYMIDINE PHOSPHORYLASE"/>
    <property type="match status" value="1"/>
</dbReference>
<dbReference type="Pfam" id="PF02885">
    <property type="entry name" value="Glycos_trans_3N"/>
    <property type="match status" value="1"/>
</dbReference>
<dbReference type="Pfam" id="PF00591">
    <property type="entry name" value="Glycos_transf_3"/>
    <property type="match status" value="1"/>
</dbReference>
<dbReference type="Pfam" id="PF07831">
    <property type="entry name" value="PYNP_C"/>
    <property type="match status" value="1"/>
</dbReference>
<dbReference type="PIRSF" id="PIRSF000478">
    <property type="entry name" value="TP_PyNP"/>
    <property type="match status" value="1"/>
</dbReference>
<dbReference type="SMART" id="SM00941">
    <property type="entry name" value="PYNP_C"/>
    <property type="match status" value="1"/>
</dbReference>
<dbReference type="SUPFAM" id="SSF52418">
    <property type="entry name" value="Nucleoside phosphorylase/phosphoribosyltransferase catalytic domain"/>
    <property type="match status" value="1"/>
</dbReference>
<dbReference type="SUPFAM" id="SSF47648">
    <property type="entry name" value="Nucleoside phosphorylase/phosphoribosyltransferase N-terminal domain"/>
    <property type="match status" value="1"/>
</dbReference>
<dbReference type="SUPFAM" id="SSF54680">
    <property type="entry name" value="Pyrimidine nucleoside phosphorylase C-terminal domain"/>
    <property type="match status" value="1"/>
</dbReference>
<dbReference type="PROSITE" id="PS00647">
    <property type="entry name" value="THYMID_PHOSPHORYLASE"/>
    <property type="match status" value="1"/>
</dbReference>
<protein>
    <recommendedName>
        <fullName>Pyrimidine-nucleoside phosphorylase</fullName>
        <shortName>PYNP</shortName>
        <shortName>Py-NPase</shortName>
        <ecNumber>2.4.2.2</ecNumber>
    </recommendedName>
</protein>
<evidence type="ECO:0000250" key="1">
    <source>
        <dbReference type="UniProtKB" id="P77836"/>
    </source>
</evidence>
<evidence type="ECO:0000305" key="2"/>
<accession>Q2FEZ3</accession>
<comment type="function">
    <text evidence="1">Catalyzes phosphorolysis of the pyrimidine nucleosides uridine, thymidine and 2'-deoxyuridine with the formation of the corresponding pyrimidine base and ribose-1-phosphate.</text>
</comment>
<comment type="catalytic activity">
    <reaction evidence="1">
        <text>uridine + phosphate = alpha-D-ribose 1-phosphate + uracil</text>
        <dbReference type="Rhea" id="RHEA:24388"/>
        <dbReference type="ChEBI" id="CHEBI:16704"/>
        <dbReference type="ChEBI" id="CHEBI:17568"/>
        <dbReference type="ChEBI" id="CHEBI:43474"/>
        <dbReference type="ChEBI" id="CHEBI:57720"/>
        <dbReference type="EC" id="2.4.2.2"/>
    </reaction>
</comment>
<comment type="catalytic activity">
    <reaction evidence="1">
        <text>thymidine + phosphate = 2-deoxy-alpha-D-ribose 1-phosphate + thymine</text>
        <dbReference type="Rhea" id="RHEA:16037"/>
        <dbReference type="ChEBI" id="CHEBI:17748"/>
        <dbReference type="ChEBI" id="CHEBI:17821"/>
        <dbReference type="ChEBI" id="CHEBI:43474"/>
        <dbReference type="ChEBI" id="CHEBI:57259"/>
        <dbReference type="EC" id="2.4.2.2"/>
    </reaction>
</comment>
<comment type="catalytic activity">
    <reaction evidence="1">
        <text>2'-deoxyuridine + phosphate = 2-deoxy-alpha-D-ribose 1-phosphate + uracil</text>
        <dbReference type="Rhea" id="RHEA:22824"/>
        <dbReference type="ChEBI" id="CHEBI:16450"/>
        <dbReference type="ChEBI" id="CHEBI:17568"/>
        <dbReference type="ChEBI" id="CHEBI:43474"/>
        <dbReference type="ChEBI" id="CHEBI:57259"/>
        <dbReference type="EC" id="2.4.2.2"/>
    </reaction>
</comment>
<comment type="cofactor">
    <cofactor evidence="1">
        <name>K(+)</name>
        <dbReference type="ChEBI" id="CHEBI:29103"/>
    </cofactor>
    <text evidence="1">Binds 1 K(+) ion per subunit.</text>
</comment>
<comment type="subunit">
    <text evidence="1">Homodimer.</text>
</comment>
<comment type="similarity">
    <text evidence="2">Belongs to the thymidine/pyrimidine-nucleoside phosphorylase family.</text>
</comment>
<comment type="sequence caution" evidence="2">
    <conflict type="erroneous initiation">
        <sequence resource="EMBL-CDS" id="ABD21766"/>
    </conflict>
    <text>Extended N-terminus.</text>
</comment>
<gene>
    <name type="primary">pdp</name>
    <name type="synonym">pyn</name>
    <name type="ordered locus">SAUSA300_2089</name>
</gene>